<sequence>MTEQSSGSATEQATEQETAKQETGRKNEQPEERTVTDGRYLYCLINTTTAESETGSEQESKAGSEQESKAGSEQESEQATVDWSTTGVDDNTVYVIEGESVGAVVHDCERIYDTESPEQVKQWVLRHQHVVDAASDVFGTPLPMRFNTILEGGDTSVTQWLHENHDTVREELTSFAGTWEYRIHLFWEPSTFEAQIEDEDDQLQELQQRQEEAGSGKSFLLKKQYDKRLRERKQNRRAELTTTLQETVRPVVRELLKQGSGSQLAEDTTPTKKEQVTRLAVLADEENETVLGDRLDEIVEQDGVSIKFTGPWPPYTFAPDLG</sequence>
<organism>
    <name type="scientific">Haloferax mediterranei (strain ATCC 33500 / DSM 1411 / JCM 8866 / NBRC 14739 / NCIMB 2177 / R-4)</name>
    <name type="common">Halobacterium mediterranei</name>
    <dbReference type="NCBI Taxonomy" id="523841"/>
    <lineage>
        <taxon>Archaea</taxon>
        <taxon>Methanobacteriati</taxon>
        <taxon>Methanobacteriota</taxon>
        <taxon>Stenosarchaea group</taxon>
        <taxon>Halobacteria</taxon>
        <taxon>Halobacteriales</taxon>
        <taxon>Haloferacaceae</taxon>
        <taxon>Haloferax</taxon>
    </lineage>
</organism>
<name>GVPL_HALMT</name>
<comment type="function">
    <text evidence="1">Proteins GvpF to GvpM might be involved in nucleating gas vesicle formation. A minor component of the gas vesicle (By similarity). Gas vesicles are small, hollow, gas filled protein structures that are found in several microbial planktonic microorganisms. They allow positioning of halobacteria at the optimal depth for growth in the poorly aerated, shallow brine pools of their habitat (By similarity).</text>
</comment>
<comment type="function">
    <text evidence="3 4">Expression of a 9.5 kb mc-vac DNA fragment containing 2 divergently transcribed regions (gvpD-gvpE-gvpF-gvpG-gvpH-gvpI-gvpJ-gvpK-gvpL-gvpM and gvpA-gvpC-gvpN-gvpO) allows H.volcanii to produce gas vesicles.</text>
</comment>
<comment type="subunit">
    <text evidence="1">GvpF to GvpM interact with each other in vitro, and may form multi-subunit complex(es). Interacts with GvpC, GvpN and GvpO.</text>
</comment>
<comment type="subcellular location">
    <subcellularLocation>
        <location evidence="1">Gas vesicle</location>
    </subcellularLocation>
</comment>
<comment type="induction">
    <text evidence="3 4">Transcribed from early-log phase, decreases as cells enter stationary phase, probably as a long gvpF-gvpM RNA (PubMed:1404376). Highly expressed in 25% salt, poorly expressed in 15% salt, no gas vesicles are formed at 15% salt (PubMed:8757736).</text>
</comment>
<comment type="miscellaneous">
    <text evidence="3">Encoded in a 14-gene locus called mc-vac.</text>
</comment>
<comment type="similarity">
    <text evidence="6">Belongs to the gas vesicle GvpF/GvpL family.</text>
</comment>
<proteinExistence type="evidence at transcript level"/>
<keyword id="KW-0304">Gas vesicle</keyword>
<gene>
    <name evidence="5" type="primary">gvpL</name>
    <name type="ordered locus">HFX_1705</name>
</gene>
<feature type="chain" id="PRO_0000182698" description="Gas vesicle protein L">
    <location>
        <begin position="1"/>
        <end position="322"/>
    </location>
</feature>
<feature type="region of interest" description="Disordered" evidence="2">
    <location>
        <begin position="1"/>
        <end position="85"/>
    </location>
</feature>
<feature type="compositionally biased region" description="Basic and acidic residues" evidence="2">
    <location>
        <begin position="17"/>
        <end position="36"/>
    </location>
</feature>
<feature type="compositionally biased region" description="Polar residues" evidence="2">
    <location>
        <begin position="45"/>
        <end position="57"/>
    </location>
</feature>
<feature type="compositionally biased region" description="Basic and acidic residues" evidence="2">
    <location>
        <begin position="58"/>
        <end position="72"/>
    </location>
</feature>
<feature type="compositionally biased region" description="Polar residues" evidence="2">
    <location>
        <begin position="73"/>
        <end position="85"/>
    </location>
</feature>
<evidence type="ECO:0000250" key="1">
    <source>
        <dbReference type="UniProtKB" id="Q9HI27"/>
    </source>
</evidence>
<evidence type="ECO:0000256" key="2">
    <source>
        <dbReference type="SAM" id="MobiDB-lite"/>
    </source>
</evidence>
<evidence type="ECO:0000269" key="3">
    <source>
    </source>
</evidence>
<evidence type="ECO:0000269" key="4">
    <source>
    </source>
</evidence>
<evidence type="ECO:0000303" key="5">
    <source>
    </source>
</evidence>
<evidence type="ECO:0000305" key="6"/>
<dbReference type="EMBL" id="X64701">
    <property type="protein sequence ID" value="CAA45954.1"/>
    <property type="molecule type" value="Genomic_DNA"/>
</dbReference>
<dbReference type="EMBL" id="CP001868">
    <property type="protein sequence ID" value="AFK19411.1"/>
    <property type="molecule type" value="Genomic_DNA"/>
</dbReference>
<dbReference type="PIR" id="S28125">
    <property type="entry name" value="S28125"/>
</dbReference>
<dbReference type="RefSeq" id="WP_004056697.1">
    <property type="nucleotide sequence ID" value="NC_017941.2"/>
</dbReference>
<dbReference type="SMR" id="Q02237"/>
<dbReference type="STRING" id="523841.HFX_1705"/>
<dbReference type="PaxDb" id="523841-HFX_1705"/>
<dbReference type="GeneID" id="40157060"/>
<dbReference type="KEGG" id="hme:HFX_1705"/>
<dbReference type="eggNOG" id="arCOG03090">
    <property type="taxonomic scope" value="Archaea"/>
</dbReference>
<dbReference type="HOGENOM" id="CLU_065736_1_0_2"/>
<dbReference type="OrthoDB" id="350702at2157"/>
<dbReference type="Proteomes" id="UP000006469">
    <property type="component" value="Chromosome"/>
</dbReference>
<dbReference type="GO" id="GO:0031411">
    <property type="term" value="C:gas vesicle"/>
    <property type="evidence" value="ECO:0007669"/>
    <property type="project" value="UniProtKB-SubCell"/>
</dbReference>
<dbReference type="GO" id="GO:0031412">
    <property type="term" value="P:gas vesicle organization"/>
    <property type="evidence" value="ECO:0007669"/>
    <property type="project" value="InterPro"/>
</dbReference>
<dbReference type="InterPro" id="IPR054796">
    <property type="entry name" value="Gas_vesic_GvpL"/>
</dbReference>
<dbReference type="InterPro" id="IPR009430">
    <property type="entry name" value="GvpL/GvpF"/>
</dbReference>
<dbReference type="NCBIfam" id="NF045778">
    <property type="entry name" value="gas_vesic_GvpL"/>
    <property type="match status" value="1"/>
</dbReference>
<dbReference type="PANTHER" id="PTHR36852">
    <property type="entry name" value="PROTEIN GVPL 2"/>
    <property type="match status" value="1"/>
</dbReference>
<dbReference type="PANTHER" id="PTHR36852:SF1">
    <property type="entry name" value="PROTEIN GVPL 2"/>
    <property type="match status" value="1"/>
</dbReference>
<dbReference type="Pfam" id="PF06386">
    <property type="entry name" value="GvpL_GvpF"/>
    <property type="match status" value="1"/>
</dbReference>
<protein>
    <recommendedName>
        <fullName>Gas vesicle protein L</fullName>
        <shortName>GvpL</shortName>
    </recommendedName>
</protein>
<accession>Q02237</accession>
<accession>I3R5A1</accession>
<reference key="1">
    <citation type="journal article" date="1992" name="J. Mol. Biol.">
        <title>Three different but related gene clusters encoding gas vesicles in halophilic archaea.</title>
        <authorList>
            <person name="Englert C."/>
            <person name="Krueger K."/>
            <person name="Offner S."/>
            <person name="Pfeifer F."/>
        </authorList>
    </citation>
    <scope>NUCLEOTIDE SEQUENCE [GENOMIC DNA]</scope>
    <scope>INDUCTION</scope>
    <scope>GAS VESICLE GENE CLUSTER</scope>
    <source>
        <strain>ATCC 33500 / DSM 1411 / JCM 8866 / NBRC 14739 / NCIMB 2177 / R-4</strain>
    </source>
</reference>
<reference key="2">
    <citation type="journal article" date="2012" name="J. Bacteriol.">
        <title>Complete genome sequence of the metabolically versatile halophilic archaeon Haloferax mediterranei, a poly(3-hydroxybutyrate-co-3-hydroxyvalerate) producer.</title>
        <authorList>
            <person name="Han J."/>
            <person name="Zhang F."/>
            <person name="Hou J."/>
            <person name="Liu X."/>
            <person name="Li M."/>
            <person name="Liu H."/>
            <person name="Cai L."/>
            <person name="Zhang B."/>
            <person name="Chen Y."/>
            <person name="Zhou J."/>
            <person name="Hu S."/>
            <person name="Xiang H."/>
        </authorList>
    </citation>
    <scope>NUCLEOTIDE SEQUENCE [LARGE SCALE GENOMIC DNA]</scope>
    <source>
        <strain>ATCC 33500 / DSM 1411 / JCM 8866 / NBRC 14739 / NCIMB 2177 / R-4</strain>
    </source>
</reference>
<reference key="3">
    <citation type="journal article" date="1996" name="Microbiology">
        <title>Influence of salt on the transcription of the gas-vesicle genes of Haloferax mediterranei and identification of the endogenous transcriptional activator gene.</title>
        <authorList>
            <person name="Roeder R."/>
            <person name="Pfeifer F."/>
        </authorList>
    </citation>
    <scope>INDUCTION BY SALT</scope>
    <source>
        <strain>ATCC 33500 / DSM 1411 / JCM 8866 / NBRC 14739 / NCIMB 2177 / R-4</strain>
    </source>
</reference>